<reference key="1">
    <citation type="journal article" date="2004" name="Proc. Natl. Acad. Sci. U.S.A.">
        <title>H5N1 influenza: a protean pandemic threat.</title>
        <authorList>
            <person name="Guan Y."/>
            <person name="Poon L.L.M."/>
            <person name="Cheung C.Y."/>
            <person name="Ellis T.M."/>
            <person name="Lim W."/>
            <person name="Lipatov A.S."/>
            <person name="Chan K.H."/>
            <person name="Sturm-Ramirez K.M."/>
            <person name="Cheung C.L."/>
            <person name="Leung Y.H.C."/>
            <person name="Yuen K.Y."/>
            <person name="Webster R.G."/>
            <person name="Peiris J.S.M."/>
        </authorList>
    </citation>
    <scope>NUCLEOTIDE SEQUENCE [GENOMIC RNA]</scope>
</reference>
<organismHost>
    <name type="scientific">Aves</name>
    <dbReference type="NCBI Taxonomy" id="8782"/>
</organismHost>
<organismHost>
    <name type="scientific">Felis catus</name>
    <name type="common">Cat</name>
    <name type="synonym">Felis silvestris catus</name>
    <dbReference type="NCBI Taxonomy" id="9685"/>
</organismHost>
<organismHost>
    <name type="scientific">Homo sapiens</name>
    <name type="common">Human</name>
    <dbReference type="NCBI Taxonomy" id="9606"/>
</organismHost>
<organismHost>
    <name type="scientific">Panthera pardus</name>
    <name type="common">Leopard</name>
    <name type="synonym">Felis pardus</name>
    <dbReference type="NCBI Taxonomy" id="9691"/>
</organismHost>
<organismHost>
    <name type="scientific">Panthera tigris</name>
    <name type="common">Tiger</name>
    <dbReference type="NCBI Taxonomy" id="9694"/>
</organismHost>
<organismHost>
    <name type="scientific">Sus scrofa</name>
    <name type="common">Pig</name>
    <dbReference type="NCBI Taxonomy" id="9823"/>
</organismHost>
<protein>
    <recommendedName>
        <fullName evidence="1">Non-structural protein 1</fullName>
        <shortName evidence="1">NS1</shortName>
    </recommendedName>
    <alternativeName>
        <fullName evidence="1">NS1A</fullName>
    </alternativeName>
</protein>
<evidence type="ECO:0000255" key="1">
    <source>
        <dbReference type="HAMAP-Rule" id="MF_04066"/>
    </source>
</evidence>
<evidence type="ECO:0000256" key="2">
    <source>
        <dbReference type="SAM" id="MobiDB-lite"/>
    </source>
</evidence>
<sequence length="225" mass="25515">MDSNTVSSFQVDCFLWHVRKRFADQELGDAPFLDRLRRDQKSLRGRGSTLGLDIETATRAGKQIVERILEEESDEALKMPASRYLTDMTLEEMSRDWFMLMPKQKVAGSLCIKMDQAIMDKTIILKANFSVIFDRLETLILLRAFTEEGAIVGEISPLPSLPGHTGEDVKNAIGVLIGGLEWNDNTVRVSETIQRFAWRSSDEDGRLPLPPNQKRKMARTIESEV</sequence>
<organism>
    <name type="scientific">Influenza A virus (strain A/Hong Kong/212/2003 H5N1 genotype Z+)</name>
    <dbReference type="NCBI Taxonomy" id="279794"/>
    <lineage>
        <taxon>Viruses</taxon>
        <taxon>Riboviria</taxon>
        <taxon>Orthornavirae</taxon>
        <taxon>Negarnaviricota</taxon>
        <taxon>Polyploviricotina</taxon>
        <taxon>Insthoviricetes</taxon>
        <taxon>Articulavirales</taxon>
        <taxon>Orthomyxoviridae</taxon>
        <taxon>Alphainfluenzavirus</taxon>
        <taxon>Alphainfluenzavirus influenzae</taxon>
        <taxon>Influenza A virus</taxon>
    </lineage>
</organism>
<dbReference type="EMBL" id="AY576368">
    <property type="protein sequence ID" value="AAT39113.1"/>
    <property type="molecule type" value="Genomic_DNA"/>
</dbReference>
<dbReference type="SMR" id="Q6J880"/>
<dbReference type="GO" id="GO:0030430">
    <property type="term" value="C:host cell cytoplasm"/>
    <property type="evidence" value="ECO:0007669"/>
    <property type="project" value="UniProtKB-SubCell"/>
</dbReference>
<dbReference type="GO" id="GO:0042025">
    <property type="term" value="C:host cell nucleus"/>
    <property type="evidence" value="ECO:0007669"/>
    <property type="project" value="UniProtKB-SubCell"/>
</dbReference>
<dbReference type="GO" id="GO:0030291">
    <property type="term" value="F:protein serine/threonine kinase inhibitor activity"/>
    <property type="evidence" value="ECO:0007669"/>
    <property type="project" value="UniProtKB-KW"/>
</dbReference>
<dbReference type="GO" id="GO:0003723">
    <property type="term" value="F:RNA binding"/>
    <property type="evidence" value="ECO:0007669"/>
    <property type="project" value="UniProtKB-KW"/>
</dbReference>
<dbReference type="GO" id="GO:0039540">
    <property type="term" value="P:symbiont-mediated suppression of host cytoplasmic pattern recognition receptor signaling pathway via inhibition of RIG-I activity"/>
    <property type="evidence" value="ECO:0007669"/>
    <property type="project" value="UniProtKB-KW"/>
</dbReference>
<dbReference type="GO" id="GO:0039657">
    <property type="term" value="P:symbiont-mediated suppression of host gene expression"/>
    <property type="evidence" value="ECO:0007669"/>
    <property type="project" value="UniProtKB-KW"/>
</dbReference>
<dbReference type="GO" id="GO:0039524">
    <property type="term" value="P:symbiont-mediated suppression of host mRNA processing"/>
    <property type="evidence" value="ECO:0007669"/>
    <property type="project" value="UniProtKB-KW"/>
</dbReference>
<dbReference type="GO" id="GO:0039580">
    <property type="term" value="P:symbiont-mediated suppression of host PKR/eIFalpha signaling"/>
    <property type="evidence" value="ECO:0007669"/>
    <property type="project" value="UniProtKB-KW"/>
</dbReference>
<dbReference type="GO" id="GO:0039502">
    <property type="term" value="P:symbiont-mediated suppression of host type I interferon-mediated signaling pathway"/>
    <property type="evidence" value="ECO:0007669"/>
    <property type="project" value="UniProtKB-KW"/>
</dbReference>
<dbReference type="FunFam" id="1.10.287.10:FF:000001">
    <property type="entry name" value="Non-structural protein 1"/>
    <property type="match status" value="1"/>
</dbReference>
<dbReference type="FunFam" id="3.30.420.330:FF:000001">
    <property type="entry name" value="Non-structural protein 1"/>
    <property type="match status" value="1"/>
</dbReference>
<dbReference type="Gene3D" id="3.30.420.330">
    <property type="entry name" value="Influenza virus non-structural protein, effector domain"/>
    <property type="match status" value="1"/>
</dbReference>
<dbReference type="Gene3D" id="1.10.287.10">
    <property type="entry name" value="S15/NS1, RNA-binding"/>
    <property type="match status" value="1"/>
</dbReference>
<dbReference type="HAMAP" id="MF_04066">
    <property type="entry name" value="INFV_NS1"/>
    <property type="match status" value="1"/>
</dbReference>
<dbReference type="InterPro" id="IPR004208">
    <property type="entry name" value="NS1"/>
</dbReference>
<dbReference type="InterPro" id="IPR000256">
    <property type="entry name" value="NS1A"/>
</dbReference>
<dbReference type="InterPro" id="IPR038064">
    <property type="entry name" value="NS1A_effect_dom-like_sf"/>
</dbReference>
<dbReference type="InterPro" id="IPR009068">
    <property type="entry name" value="uS15_NS1_RNA-bd_sf"/>
</dbReference>
<dbReference type="Pfam" id="PF00600">
    <property type="entry name" value="Flu_NS1"/>
    <property type="match status" value="1"/>
</dbReference>
<dbReference type="SUPFAM" id="SSF143021">
    <property type="entry name" value="Ns1 effector domain-like"/>
    <property type="match status" value="1"/>
</dbReference>
<dbReference type="SUPFAM" id="SSF47060">
    <property type="entry name" value="S15/NS1 RNA-binding domain"/>
    <property type="match status" value="1"/>
</dbReference>
<feature type="chain" id="PRO_0000311754" description="Non-structural protein 1">
    <location>
        <begin position="1"/>
        <end position="225"/>
    </location>
</feature>
<feature type="region of interest" description="RNA-binding and homodimerization" evidence="1">
    <location>
        <begin position="1"/>
        <end position="73"/>
    </location>
</feature>
<feature type="region of interest" description="CPSF4-binding" evidence="1">
    <location>
        <begin position="175"/>
        <end position="210"/>
    </location>
</feature>
<feature type="region of interest" description="Disordered" evidence="2">
    <location>
        <begin position="204"/>
        <end position="225"/>
    </location>
</feature>
<feature type="region of interest" description="PABPN1-binding" evidence="1">
    <location>
        <begin position="218"/>
        <end position="225"/>
    </location>
</feature>
<feature type="short sequence motif" description="Nuclear localization signal" evidence="1">
    <location>
        <begin position="34"/>
        <end position="38"/>
    </location>
</feature>
<feature type="short sequence motif" description="Nuclear export signal" evidence="1">
    <location>
        <begin position="132"/>
        <end position="141"/>
    </location>
</feature>
<accession>Q6J880</accession>
<gene>
    <name evidence="1" type="primary">NS</name>
</gene>
<comment type="function">
    <text evidence="1">Inhibits post-transcriptional processing of cellular pre-mRNA, by binding and inhibiting two cellular proteins that are required for the 3'-end processing of cellular pre-mRNAs: the 30 kDa cleavage and polyadenylation specificity factor/CPSF4 and the poly(A)-binding protein 2/PABPN1. In turn, unprocessed 3' end pre-mRNAs accumulate in the host nucleus and are no longer exported to the cytoplasm. Cellular protein synthesis is thereby shut off very early after virus infection. Viral protein synthesis is not affected by the inhibition of the cellular 3' end processing machinery because the poly(A) tails of viral mRNAs are produced by the viral polymerase through a stuttering mechanism. Prevents the establishment of the cellular antiviral state by inhibiting TRIM25-mediated RIGI ubiquitination, which normally triggers the antiviral transduction signal that leads to the activation of type I IFN genes by transcription factors IRF3 and IRF7. Also binds poly(A) and U6 snRNA. Inhibits the integrated stress response (ISR) in the infected cell by blocking dsRNA binding by EIF2AK2/PKR and further phosphorylation of EIF2S1/EIF-2ALPHA. Stress granule formation is thus inhibited, which allows protein synthesis and viral replication.</text>
</comment>
<comment type="subunit">
    <text evidence="1">Homodimer. Interacts with host TRIM25 (via coiled coil); this interaction specifically inhibits TRIM25 multimerization and TRIM25-mediated RIGI CARD ubiquitination. Interacts with human EIF2AK2/PKR, CPSF4, IVNS1ABP and PABPN1.</text>
</comment>
<comment type="subcellular location">
    <subcellularLocation>
        <location evidence="1">Host nucleus</location>
    </subcellularLocation>
    <subcellularLocation>
        <location evidence="1">Host cytoplasm</location>
    </subcellularLocation>
    <text evidence="1">In uninfected, transfected cells, NS1 is localized in the nucleus. Only in virus infected cells, the nuclear export signal is unveiled, presumably by a viral protein, and a fraction of NS1 is exported in the cytoplasm.</text>
</comment>
<comment type="alternative products">
    <event type="alternative splicing"/>
    <isoform>
        <id>Q6J880-1</id>
        <name>NS1</name>
        <sequence type="displayed"/>
    </isoform>
    <isoform>
        <id>P0C5U3-1</id>
        <name>NEP</name>
        <name>NS2</name>
        <sequence type="external"/>
    </isoform>
</comment>
<comment type="domain">
    <text evidence="1">The dsRNA-binding region is required for suppression of RNA silencing.</text>
</comment>
<comment type="PTM">
    <text evidence="1">Upon interferon induction, ISGylated via host HERC5; this results in the impairment of NS1 interaction with RNA targets due to its inability to form homodimers and to interact with host EIF2AK2/PKR.</text>
</comment>
<comment type="similarity">
    <text evidence="1">Belongs to the influenza A viruses NS1 family.</text>
</comment>
<name>NS1_I03A0</name>
<proteinExistence type="inferred from homology"/>
<keyword id="KW-0025">Alternative splicing</keyword>
<keyword id="KW-1262">Eukaryotic host gene expression shutoff by virus</keyword>
<keyword id="KW-1035">Host cytoplasm</keyword>
<keyword id="KW-1190">Host gene expression shutoff by virus</keyword>
<keyword id="KW-1192">Host mRNA suppression by virus</keyword>
<keyword id="KW-1048">Host nucleus</keyword>
<keyword id="KW-0945">Host-virus interaction</keyword>
<keyword id="KW-1090">Inhibition of host innate immune response by virus</keyword>
<keyword id="KW-1114">Inhibition of host interferon signaling pathway by virus</keyword>
<keyword id="KW-1102">Inhibition of host PKR by virus</keyword>
<keyword id="KW-1103">Inhibition of host pre-mRNA processing by virus</keyword>
<keyword id="KW-1088">Inhibition of host RIG-I by virus</keyword>
<keyword id="KW-1113">Inhibition of host RLR pathway by virus</keyword>
<keyword id="KW-0922">Interferon antiviral system evasion</keyword>
<keyword id="KW-0694">RNA-binding</keyword>
<keyword id="KW-0832">Ubl conjugation</keyword>
<keyword id="KW-0899">Viral immunoevasion</keyword>